<protein>
    <recommendedName>
        <fullName evidence="1">Phosphonates import ATP-binding protein PhnC 2</fullName>
        <ecNumber evidence="1">7.3.2.2</ecNumber>
    </recommendedName>
</protein>
<evidence type="ECO:0000255" key="1">
    <source>
        <dbReference type="HAMAP-Rule" id="MF_01713"/>
    </source>
</evidence>
<comment type="function">
    <text evidence="1">Part of the ABC transporter complex PhnCDE involved in phosphonates import. Responsible for energy coupling to the transport system.</text>
</comment>
<comment type="catalytic activity">
    <reaction evidence="1">
        <text>phosphonate(out) + ATP + H2O = phosphonate(in) + ADP + phosphate + H(+)</text>
        <dbReference type="Rhea" id="RHEA:18065"/>
        <dbReference type="ChEBI" id="CHEBI:15377"/>
        <dbReference type="ChEBI" id="CHEBI:15378"/>
        <dbReference type="ChEBI" id="CHEBI:16215"/>
        <dbReference type="ChEBI" id="CHEBI:30616"/>
        <dbReference type="ChEBI" id="CHEBI:43474"/>
        <dbReference type="ChEBI" id="CHEBI:456216"/>
        <dbReference type="EC" id="7.3.2.2"/>
    </reaction>
</comment>
<comment type="subunit">
    <text evidence="1">The complex is composed of two ATP-binding proteins (PhnC), two transmembrane proteins (PhnE) and a solute-binding protein (PhnD).</text>
</comment>
<comment type="subcellular location">
    <subcellularLocation>
        <location evidence="1">Cell inner membrane</location>
        <topology evidence="1">Peripheral membrane protein</topology>
    </subcellularLocation>
</comment>
<comment type="similarity">
    <text evidence="1">Belongs to the ABC transporter superfamily. Phosphonates importer (TC 3.A.1.9.1) family.</text>
</comment>
<keyword id="KW-0067">ATP-binding</keyword>
<keyword id="KW-0997">Cell inner membrane</keyword>
<keyword id="KW-1003">Cell membrane</keyword>
<keyword id="KW-0472">Membrane</keyword>
<keyword id="KW-0547">Nucleotide-binding</keyword>
<keyword id="KW-0918">Phosphonate transport</keyword>
<keyword id="KW-1278">Translocase</keyword>
<keyword id="KW-0813">Transport</keyword>
<accession>Q48HL2</accession>
<dbReference type="EC" id="7.3.2.2" evidence="1"/>
<dbReference type="EMBL" id="CP000058">
    <property type="protein sequence ID" value="AAZ37103.1"/>
    <property type="molecule type" value="Genomic_DNA"/>
</dbReference>
<dbReference type="SMR" id="Q48HL2"/>
<dbReference type="KEGG" id="psp:PSPPH_2940"/>
<dbReference type="eggNOG" id="COG3638">
    <property type="taxonomic scope" value="Bacteria"/>
</dbReference>
<dbReference type="HOGENOM" id="CLU_000604_1_22_6"/>
<dbReference type="Proteomes" id="UP000000551">
    <property type="component" value="Chromosome"/>
</dbReference>
<dbReference type="GO" id="GO:0005886">
    <property type="term" value="C:plasma membrane"/>
    <property type="evidence" value="ECO:0007669"/>
    <property type="project" value="UniProtKB-SubCell"/>
</dbReference>
<dbReference type="GO" id="GO:0015416">
    <property type="term" value="F:ABC-type phosphonate transporter activity"/>
    <property type="evidence" value="ECO:0007669"/>
    <property type="project" value="UniProtKB-EC"/>
</dbReference>
<dbReference type="GO" id="GO:0005524">
    <property type="term" value="F:ATP binding"/>
    <property type="evidence" value="ECO:0007669"/>
    <property type="project" value="UniProtKB-KW"/>
</dbReference>
<dbReference type="GO" id="GO:0016887">
    <property type="term" value="F:ATP hydrolysis activity"/>
    <property type="evidence" value="ECO:0007669"/>
    <property type="project" value="InterPro"/>
</dbReference>
<dbReference type="CDD" id="cd03256">
    <property type="entry name" value="ABC_PhnC_transporter"/>
    <property type="match status" value="1"/>
</dbReference>
<dbReference type="Gene3D" id="3.40.50.300">
    <property type="entry name" value="P-loop containing nucleotide triphosphate hydrolases"/>
    <property type="match status" value="1"/>
</dbReference>
<dbReference type="InterPro" id="IPR003593">
    <property type="entry name" value="AAA+_ATPase"/>
</dbReference>
<dbReference type="InterPro" id="IPR003439">
    <property type="entry name" value="ABC_transporter-like_ATP-bd"/>
</dbReference>
<dbReference type="InterPro" id="IPR017871">
    <property type="entry name" value="ABC_transporter-like_CS"/>
</dbReference>
<dbReference type="InterPro" id="IPR012693">
    <property type="entry name" value="ABC_transpr_PhnC"/>
</dbReference>
<dbReference type="InterPro" id="IPR050086">
    <property type="entry name" value="MetN_ABC_transporter-like"/>
</dbReference>
<dbReference type="InterPro" id="IPR027417">
    <property type="entry name" value="P-loop_NTPase"/>
</dbReference>
<dbReference type="NCBIfam" id="TIGR02315">
    <property type="entry name" value="ABC_phnC"/>
    <property type="match status" value="1"/>
</dbReference>
<dbReference type="PANTHER" id="PTHR43166">
    <property type="entry name" value="AMINO ACID IMPORT ATP-BINDING PROTEIN"/>
    <property type="match status" value="1"/>
</dbReference>
<dbReference type="PANTHER" id="PTHR43166:SF6">
    <property type="entry name" value="PHOSPHONATES IMPORT ATP-BINDING PROTEIN PHNC"/>
    <property type="match status" value="1"/>
</dbReference>
<dbReference type="Pfam" id="PF00005">
    <property type="entry name" value="ABC_tran"/>
    <property type="match status" value="1"/>
</dbReference>
<dbReference type="SMART" id="SM00382">
    <property type="entry name" value="AAA"/>
    <property type="match status" value="1"/>
</dbReference>
<dbReference type="SUPFAM" id="SSF52540">
    <property type="entry name" value="P-loop containing nucleoside triphosphate hydrolases"/>
    <property type="match status" value="1"/>
</dbReference>
<dbReference type="PROSITE" id="PS00211">
    <property type="entry name" value="ABC_TRANSPORTER_1"/>
    <property type="match status" value="1"/>
</dbReference>
<dbReference type="PROSITE" id="PS50893">
    <property type="entry name" value="ABC_TRANSPORTER_2"/>
    <property type="match status" value="1"/>
</dbReference>
<dbReference type="PROSITE" id="PS51249">
    <property type="entry name" value="PHNC"/>
    <property type="match status" value="1"/>
</dbReference>
<proteinExistence type="inferred from homology"/>
<name>PHNC2_PSE14</name>
<reference key="1">
    <citation type="journal article" date="2005" name="J. Bacteriol.">
        <title>Whole-genome sequence analysis of Pseudomonas syringae pv. phaseolicola 1448A reveals divergence among pathovars in genes involved in virulence and transposition.</title>
        <authorList>
            <person name="Joardar V."/>
            <person name="Lindeberg M."/>
            <person name="Jackson R.W."/>
            <person name="Selengut J."/>
            <person name="Dodson R."/>
            <person name="Brinkac L.M."/>
            <person name="Daugherty S.C."/>
            <person name="DeBoy R.T."/>
            <person name="Durkin A.S."/>
            <person name="Gwinn Giglio M."/>
            <person name="Madupu R."/>
            <person name="Nelson W.C."/>
            <person name="Rosovitz M.J."/>
            <person name="Sullivan S.A."/>
            <person name="Crabtree J."/>
            <person name="Creasy T."/>
            <person name="Davidsen T.M."/>
            <person name="Haft D.H."/>
            <person name="Zafar N."/>
            <person name="Zhou L."/>
            <person name="Halpin R."/>
            <person name="Holley T."/>
            <person name="Khouri H.M."/>
            <person name="Feldblyum T.V."/>
            <person name="White O."/>
            <person name="Fraser C.M."/>
            <person name="Chatterjee A.K."/>
            <person name="Cartinhour S."/>
            <person name="Schneider D."/>
            <person name="Mansfield J.W."/>
            <person name="Collmer A."/>
            <person name="Buell R."/>
        </authorList>
    </citation>
    <scope>NUCLEOTIDE SEQUENCE [LARGE SCALE GENOMIC DNA]</scope>
    <source>
        <strain>1448A / Race 6</strain>
    </source>
</reference>
<feature type="chain" id="PRO_0000274729" description="Phosphonates import ATP-binding protein PhnC 2">
    <location>
        <begin position="1"/>
        <end position="277"/>
    </location>
</feature>
<feature type="domain" description="ABC transporter" evidence="1">
    <location>
        <begin position="5"/>
        <end position="253"/>
    </location>
</feature>
<feature type="binding site" evidence="1">
    <location>
        <begin position="37"/>
        <end position="44"/>
    </location>
    <ligand>
        <name>ATP</name>
        <dbReference type="ChEBI" id="CHEBI:30616"/>
    </ligand>
</feature>
<organism>
    <name type="scientific">Pseudomonas savastanoi pv. phaseolicola (strain 1448A / Race 6)</name>
    <name type="common">Pseudomonas syringae pv. phaseolicola (strain 1448A / Race 6)</name>
    <dbReference type="NCBI Taxonomy" id="264730"/>
    <lineage>
        <taxon>Bacteria</taxon>
        <taxon>Pseudomonadati</taxon>
        <taxon>Pseudomonadota</taxon>
        <taxon>Gammaproteobacteria</taxon>
        <taxon>Pseudomonadales</taxon>
        <taxon>Pseudomonadaceae</taxon>
        <taxon>Pseudomonas</taxon>
    </lineage>
</organism>
<gene>
    <name evidence="1" type="primary">phnC2</name>
    <name type="ordered locus">PSPPH_2940</name>
</gene>
<sequence length="277" mass="30321">MNDAIHVQGLNKTFSHKSALVDLALSIQPGEMVALIGASGSGKSTLLRHLAGLACCDRSNGGQVQVLGREVQSSGRLNSQVRRLRADIGYIFQQFNLVNRLSVLDNVLLGCLGRMPRWRGSLALFNREEKQRAMAALDRVGLADLATQRASTLSGGQQQRVAIARALTQRAEVILADEPIASLDPESARRVMEILADINRSDGKTVVVTLHQVDYAVRYCPRAVALKGGRIHFDGLAQDLSKQFLNDLYGADADASLMITERSRRVRQKPRLELAKV</sequence>